<organism>
    <name type="scientific">Schizosaccharomyces pombe (strain 972 / ATCC 24843)</name>
    <name type="common">Fission yeast</name>
    <dbReference type="NCBI Taxonomy" id="284812"/>
    <lineage>
        <taxon>Eukaryota</taxon>
        <taxon>Fungi</taxon>
        <taxon>Dikarya</taxon>
        <taxon>Ascomycota</taxon>
        <taxon>Taphrinomycotina</taxon>
        <taxon>Schizosaccharomycetes</taxon>
        <taxon>Schizosaccharomycetales</taxon>
        <taxon>Schizosaccharomycetaceae</taxon>
        <taxon>Schizosaccharomyces</taxon>
    </lineage>
</organism>
<feature type="chain" id="PRO_0000116765" description="Uncharacterized protein C354.04">
    <location>
        <begin position="1"/>
        <end position="163"/>
    </location>
</feature>
<gene>
    <name type="ORF">SPBC354.04</name>
</gene>
<protein>
    <recommendedName>
        <fullName>Uncharacterized protein C354.04</fullName>
    </recommendedName>
</protein>
<dbReference type="EMBL" id="CU329671">
    <property type="protein sequence ID" value="CAA17804.1"/>
    <property type="molecule type" value="Genomic_DNA"/>
</dbReference>
<dbReference type="PIR" id="T40284">
    <property type="entry name" value="T40284"/>
</dbReference>
<dbReference type="RefSeq" id="NP_595228.1">
    <property type="nucleotide sequence ID" value="NM_001021134.2"/>
</dbReference>
<dbReference type="BioGRID" id="277535">
    <property type="interactions" value="11"/>
</dbReference>
<dbReference type="PaxDb" id="4896-SPBC354.04.1"/>
<dbReference type="EnsemblFungi" id="SPBC354.04.1">
    <property type="protein sequence ID" value="SPBC354.04.1:pep"/>
    <property type="gene ID" value="SPBC354.04"/>
</dbReference>
<dbReference type="KEGG" id="spo:2541020"/>
<dbReference type="PomBase" id="SPBC354.04"/>
<dbReference type="VEuPathDB" id="FungiDB:SPBC354.04"/>
<dbReference type="eggNOG" id="ENOG502S8SI">
    <property type="taxonomic scope" value="Eukaryota"/>
</dbReference>
<dbReference type="HOGENOM" id="CLU_132340_0_0_1"/>
<dbReference type="InParanoid" id="O43018"/>
<dbReference type="OMA" id="KRWIFIN"/>
<dbReference type="PRO" id="PR:O43018"/>
<dbReference type="Proteomes" id="UP000002485">
    <property type="component" value="Chromosome II"/>
</dbReference>
<dbReference type="GO" id="GO:0005829">
    <property type="term" value="C:cytosol"/>
    <property type="evidence" value="ECO:0007005"/>
    <property type="project" value="PomBase"/>
</dbReference>
<dbReference type="GO" id="GO:0005634">
    <property type="term" value="C:nucleus"/>
    <property type="evidence" value="ECO:0007005"/>
    <property type="project" value="PomBase"/>
</dbReference>
<name>YGV4_SCHPO</name>
<reference key="1">
    <citation type="journal article" date="2002" name="Nature">
        <title>The genome sequence of Schizosaccharomyces pombe.</title>
        <authorList>
            <person name="Wood V."/>
            <person name="Gwilliam R."/>
            <person name="Rajandream M.A."/>
            <person name="Lyne M.H."/>
            <person name="Lyne R."/>
            <person name="Stewart A."/>
            <person name="Sgouros J.G."/>
            <person name="Peat N."/>
            <person name="Hayles J."/>
            <person name="Baker S.G."/>
            <person name="Basham D."/>
            <person name="Bowman S."/>
            <person name="Brooks K."/>
            <person name="Brown D."/>
            <person name="Brown S."/>
            <person name="Chillingworth T."/>
            <person name="Churcher C.M."/>
            <person name="Collins M."/>
            <person name="Connor R."/>
            <person name="Cronin A."/>
            <person name="Davis P."/>
            <person name="Feltwell T."/>
            <person name="Fraser A."/>
            <person name="Gentles S."/>
            <person name="Goble A."/>
            <person name="Hamlin N."/>
            <person name="Harris D.E."/>
            <person name="Hidalgo J."/>
            <person name="Hodgson G."/>
            <person name="Holroyd S."/>
            <person name="Hornsby T."/>
            <person name="Howarth S."/>
            <person name="Huckle E.J."/>
            <person name="Hunt S."/>
            <person name="Jagels K."/>
            <person name="James K.D."/>
            <person name="Jones L."/>
            <person name="Jones M."/>
            <person name="Leather S."/>
            <person name="McDonald S."/>
            <person name="McLean J."/>
            <person name="Mooney P."/>
            <person name="Moule S."/>
            <person name="Mungall K.L."/>
            <person name="Murphy L.D."/>
            <person name="Niblett D."/>
            <person name="Odell C."/>
            <person name="Oliver K."/>
            <person name="O'Neil S."/>
            <person name="Pearson D."/>
            <person name="Quail M.A."/>
            <person name="Rabbinowitsch E."/>
            <person name="Rutherford K.M."/>
            <person name="Rutter S."/>
            <person name="Saunders D."/>
            <person name="Seeger K."/>
            <person name="Sharp S."/>
            <person name="Skelton J."/>
            <person name="Simmonds M.N."/>
            <person name="Squares R."/>
            <person name="Squares S."/>
            <person name="Stevens K."/>
            <person name="Taylor K."/>
            <person name="Taylor R.G."/>
            <person name="Tivey A."/>
            <person name="Walsh S.V."/>
            <person name="Warren T."/>
            <person name="Whitehead S."/>
            <person name="Woodward J.R."/>
            <person name="Volckaert G."/>
            <person name="Aert R."/>
            <person name="Robben J."/>
            <person name="Grymonprez B."/>
            <person name="Weltjens I."/>
            <person name="Vanstreels E."/>
            <person name="Rieger M."/>
            <person name="Schaefer M."/>
            <person name="Mueller-Auer S."/>
            <person name="Gabel C."/>
            <person name="Fuchs M."/>
            <person name="Duesterhoeft A."/>
            <person name="Fritzc C."/>
            <person name="Holzer E."/>
            <person name="Moestl D."/>
            <person name="Hilbert H."/>
            <person name="Borzym K."/>
            <person name="Langer I."/>
            <person name="Beck A."/>
            <person name="Lehrach H."/>
            <person name="Reinhardt R."/>
            <person name="Pohl T.M."/>
            <person name="Eger P."/>
            <person name="Zimmermann W."/>
            <person name="Wedler H."/>
            <person name="Wambutt R."/>
            <person name="Purnelle B."/>
            <person name="Goffeau A."/>
            <person name="Cadieu E."/>
            <person name="Dreano S."/>
            <person name="Gloux S."/>
            <person name="Lelaure V."/>
            <person name="Mottier S."/>
            <person name="Galibert F."/>
            <person name="Aves S.J."/>
            <person name="Xiang Z."/>
            <person name="Hunt C."/>
            <person name="Moore K."/>
            <person name="Hurst S.M."/>
            <person name="Lucas M."/>
            <person name="Rochet M."/>
            <person name="Gaillardin C."/>
            <person name="Tallada V.A."/>
            <person name="Garzon A."/>
            <person name="Thode G."/>
            <person name="Daga R.R."/>
            <person name="Cruzado L."/>
            <person name="Jimenez J."/>
            <person name="Sanchez M."/>
            <person name="del Rey F."/>
            <person name="Benito J."/>
            <person name="Dominguez A."/>
            <person name="Revuelta J.L."/>
            <person name="Moreno S."/>
            <person name="Armstrong J."/>
            <person name="Forsburg S.L."/>
            <person name="Cerutti L."/>
            <person name="Lowe T."/>
            <person name="McCombie W.R."/>
            <person name="Paulsen I."/>
            <person name="Potashkin J."/>
            <person name="Shpakovski G.V."/>
            <person name="Ussery D."/>
            <person name="Barrell B.G."/>
            <person name="Nurse P."/>
        </authorList>
    </citation>
    <scope>NUCLEOTIDE SEQUENCE [LARGE SCALE GENOMIC DNA]</scope>
    <source>
        <strain>972 / ATCC 24843</strain>
    </source>
</reference>
<sequence>MSENPAHKDLDSLQVDEKAKSWIAEKVEEELRRLESVGAKAIPLDVKNYSVMLDEDTDTVVNRIELMTSFDFDHVQQILLSAVQPYPYDKNLMFVYLVILTPLPHPMLIPYLFAPKVVGKNLLPRADGLVENTLKRWTFINDKLKRSDTVVREFQEIEEEATK</sequence>
<accession>O43018</accession>
<keyword id="KW-1185">Reference proteome</keyword>
<proteinExistence type="predicted"/>